<reference key="1">
    <citation type="journal article" date="2012" name="PLoS ONE">
        <title>Identification and phylogenetic analysis of Tityus pachyurus and Tityus obscurus novel putative Na+-channel scorpion toxins.</title>
        <authorList>
            <person name="Guerrero-Vargas J.A."/>
            <person name="Mourao C.B."/>
            <person name="Quintero-Hernandez V."/>
            <person name="Possani L.D."/>
            <person name="Schwartz E.F."/>
        </authorList>
    </citation>
    <scope>NUCLEOTIDE SEQUENCE [MRNA]</scope>
    <scope>NOMENCLATURE</scope>
    <source>
        <tissue>Venom gland</tissue>
    </source>
</reference>
<feature type="signal peptide" evidence="2">
    <location>
        <begin position="1"/>
        <end position="20"/>
    </location>
</feature>
<feature type="chain" id="PRO_5000851446" description="Toxin Tpa5">
    <location>
        <begin position="21"/>
        <end position="86"/>
    </location>
</feature>
<feature type="domain" description="LCN-type CS-alpha/beta" evidence="3">
    <location>
        <begin position="22"/>
        <end position="85"/>
    </location>
</feature>
<feature type="disulfide bond" evidence="3">
    <location>
        <begin position="33"/>
        <end position="84"/>
    </location>
</feature>
<feature type="disulfide bond" evidence="3">
    <location>
        <begin position="37"/>
        <end position="58"/>
    </location>
</feature>
<feature type="disulfide bond" evidence="3">
    <location>
        <begin position="43"/>
        <end position="64"/>
    </location>
</feature>
<feature type="disulfide bond" evidence="3">
    <location>
        <begin position="47"/>
        <end position="66"/>
    </location>
</feature>
<name>SCX5_TITPA</name>
<dbReference type="EMBL" id="HE585240">
    <property type="protein sequence ID" value="CCD31434.1"/>
    <property type="molecule type" value="mRNA"/>
</dbReference>
<dbReference type="SMR" id="H1ZZI6"/>
<dbReference type="GO" id="GO:0005576">
    <property type="term" value="C:extracellular region"/>
    <property type="evidence" value="ECO:0007669"/>
    <property type="project" value="UniProtKB-SubCell"/>
</dbReference>
<dbReference type="GO" id="GO:0019871">
    <property type="term" value="F:sodium channel inhibitor activity"/>
    <property type="evidence" value="ECO:0007669"/>
    <property type="project" value="InterPro"/>
</dbReference>
<dbReference type="GO" id="GO:0090729">
    <property type="term" value="F:toxin activity"/>
    <property type="evidence" value="ECO:0007669"/>
    <property type="project" value="UniProtKB-KW"/>
</dbReference>
<dbReference type="CDD" id="cd23106">
    <property type="entry name" value="neurotoxins_LC_scorpion"/>
    <property type="match status" value="1"/>
</dbReference>
<dbReference type="Gene3D" id="3.30.30.10">
    <property type="entry name" value="Knottin, scorpion toxin-like"/>
    <property type="match status" value="1"/>
</dbReference>
<dbReference type="InterPro" id="IPR044062">
    <property type="entry name" value="LCN-type_CS_alpha_beta_dom"/>
</dbReference>
<dbReference type="InterPro" id="IPR036574">
    <property type="entry name" value="Scorpion_toxin-like_sf"/>
</dbReference>
<dbReference type="InterPro" id="IPR002061">
    <property type="entry name" value="Scorpion_toxinL/defensin"/>
</dbReference>
<dbReference type="Pfam" id="PF00537">
    <property type="entry name" value="Toxin_3"/>
    <property type="match status" value="1"/>
</dbReference>
<dbReference type="SUPFAM" id="SSF57095">
    <property type="entry name" value="Scorpion toxin-like"/>
    <property type="match status" value="1"/>
</dbReference>
<dbReference type="PROSITE" id="PS51863">
    <property type="entry name" value="LCN_CSAB"/>
    <property type="match status" value="1"/>
</dbReference>
<sequence length="86" mass="9433">MSIFPIALALLLIGLEEGEAARDGYPISKNNYCKIYCPNTKVCKETCKNRASAPDGECDGWNLCYCFKVPDNIPVWGDPGTPPCMT</sequence>
<protein>
    <recommendedName>
        <fullName>Toxin Tpa5</fullName>
    </recommendedName>
    <alternativeName>
        <fullName>T-alpha* NaTx7.2</fullName>
    </alternativeName>
</protein>
<proteinExistence type="evidence at transcript level"/>
<organism>
    <name type="scientific">Tityus pachyurus</name>
    <name type="common">Colombian scorpion</name>
    <dbReference type="NCBI Taxonomy" id="288781"/>
    <lineage>
        <taxon>Eukaryota</taxon>
        <taxon>Metazoa</taxon>
        <taxon>Ecdysozoa</taxon>
        <taxon>Arthropoda</taxon>
        <taxon>Chelicerata</taxon>
        <taxon>Arachnida</taxon>
        <taxon>Scorpiones</taxon>
        <taxon>Buthida</taxon>
        <taxon>Buthoidea</taxon>
        <taxon>Buthidae</taxon>
        <taxon>Tityus</taxon>
    </lineage>
</organism>
<comment type="function">
    <text evidence="1">Beta toxins bind voltage-independently at site-4 of sodium channels (Nav) and shift the voltage of activation toward more negative potentials thereby affecting sodium channel activation and promoting spontaneous and repetitive firing.</text>
</comment>
<comment type="subcellular location">
    <subcellularLocation>
        <location>Secreted</location>
    </subcellularLocation>
</comment>
<comment type="tissue specificity">
    <text>Expressed by the venom gland.</text>
</comment>
<comment type="domain">
    <text evidence="4">Has the structural arrangement of an alpha-helix connected to antiparallel beta-sheets by disulfide bonds (CS-alpha/beta).</text>
</comment>
<comment type="similarity">
    <text evidence="4">Belongs to the long (4 C-C) scorpion toxin superfamily. Sodium channel inhibitor family. Beta subfamily.</text>
</comment>
<evidence type="ECO:0000250" key="1"/>
<evidence type="ECO:0000255" key="2"/>
<evidence type="ECO:0000255" key="3">
    <source>
        <dbReference type="PROSITE-ProRule" id="PRU01210"/>
    </source>
</evidence>
<evidence type="ECO:0000305" key="4"/>
<accession>H1ZZI6</accession>
<keyword id="KW-1015">Disulfide bond</keyword>
<keyword id="KW-0872">Ion channel impairing toxin</keyword>
<keyword id="KW-0528">Neurotoxin</keyword>
<keyword id="KW-0964">Secreted</keyword>
<keyword id="KW-0732">Signal</keyword>
<keyword id="KW-0800">Toxin</keyword>
<keyword id="KW-0738">Voltage-gated sodium channel impairing toxin</keyword>